<dbReference type="EMBL" id="DQ647666">
    <property type="protein sequence ID" value="ABG23523.1"/>
    <property type="molecule type" value="Genomic_DNA"/>
</dbReference>
<dbReference type="GO" id="GO:0048315">
    <property type="term" value="P:conidium formation"/>
    <property type="evidence" value="ECO:0007669"/>
    <property type="project" value="UniProtKB-KW"/>
</dbReference>
<dbReference type="GO" id="GO:0030435">
    <property type="term" value="P:sporulation resulting in formation of a cellular spore"/>
    <property type="evidence" value="ECO:0007669"/>
    <property type="project" value="UniProtKB-KW"/>
</dbReference>
<dbReference type="InterPro" id="IPR040112">
    <property type="entry name" value="WetA"/>
</dbReference>
<dbReference type="PANTHER" id="PTHR22934:SF25">
    <property type="entry name" value="DEVELOPMENTAL REGULATORY PROTEIN WETA"/>
    <property type="match status" value="1"/>
</dbReference>
<dbReference type="PANTHER" id="PTHR22934">
    <property type="entry name" value="PROTEIN ESC1/WETA-RELATED"/>
    <property type="match status" value="1"/>
</dbReference>
<proteinExistence type="evidence at transcript level"/>
<comment type="function">
    <text evidence="1">BrlA, abaA and wetA are pivotal regulators of conidiophore development and conidium maturation (By similarity). They act individually and together to regulate their own expression and that of numerous other sporulation-specific genes (By similarity).</text>
</comment>
<comment type="induction">
    <text evidence="3">A huge increase in expression is observed between the fourth and fifth day for solid and liquid cultures (PubMed:18093806).</text>
</comment>
<comment type="similarity">
    <text evidence="5">Belongs to the wetA family.</text>
</comment>
<gene>
    <name evidence="4" type="primary">wetA</name>
</gene>
<protein>
    <recommendedName>
        <fullName evidence="5">Developmental regulatory protein wetA</fullName>
    </recommendedName>
</protein>
<reference key="1">
    <citation type="journal article" date="2008" name="Res. Microbiol.">
        <title>Cloning and expression of genes involved in conidiation and surface properties of Penicillium camemberti grown in liquid and solid cultures.</title>
        <authorList>
            <person name="Boualem K."/>
            <person name="Wache Y."/>
            <person name="Garmyn D."/>
            <person name="Karbowiak T."/>
            <person name="Durand A."/>
            <person name="Gervais P."/>
            <person name="Cavin J.F."/>
        </authorList>
    </citation>
    <scope>NUCLEOTIDE SEQUENCE [GENOMIC DNA]</scope>
    <scope>INDUCTION</scope>
    <source>
        <strain>ENS1</strain>
    </source>
</reference>
<name>WETA_PENCA</name>
<evidence type="ECO:0000250" key="1">
    <source>
        <dbReference type="UniProtKB" id="P22022"/>
    </source>
</evidence>
<evidence type="ECO:0000256" key="2">
    <source>
        <dbReference type="SAM" id="MobiDB-lite"/>
    </source>
</evidence>
<evidence type="ECO:0000269" key="3">
    <source>
    </source>
</evidence>
<evidence type="ECO:0000303" key="4">
    <source>
    </source>
</evidence>
<evidence type="ECO:0000305" key="5"/>
<organism>
    <name type="scientific">Penicillium camembertii</name>
    <dbReference type="NCBI Taxonomy" id="5075"/>
    <lineage>
        <taxon>Eukaryota</taxon>
        <taxon>Fungi</taxon>
        <taxon>Dikarya</taxon>
        <taxon>Ascomycota</taxon>
        <taxon>Pezizomycotina</taxon>
        <taxon>Eurotiomycetes</taxon>
        <taxon>Eurotiomycetidae</taxon>
        <taxon>Eurotiales</taxon>
        <taxon>Aspergillaceae</taxon>
        <taxon>Penicillium</taxon>
    </lineage>
</organism>
<keyword id="KW-0010">Activator</keyword>
<keyword id="KW-0183">Conidiation</keyword>
<keyword id="KW-0749">Sporulation</keyword>
<keyword id="KW-0804">Transcription</keyword>
<keyword id="KW-0805">Transcription regulation</keyword>
<feature type="chain" id="PRO_0000435932" description="Developmental regulatory protein wetA">
    <location>
        <begin position="1"/>
        <end position="519"/>
    </location>
</feature>
<feature type="region of interest" description="Disordered" evidence="2">
    <location>
        <begin position="105"/>
        <end position="165"/>
    </location>
</feature>
<feature type="region of interest" description="Disordered" evidence="2">
    <location>
        <begin position="270"/>
        <end position="294"/>
    </location>
</feature>
<feature type="region of interest" description="Disordered" evidence="2">
    <location>
        <begin position="301"/>
        <end position="320"/>
    </location>
</feature>
<feature type="region of interest" description="Disordered" evidence="2">
    <location>
        <begin position="325"/>
        <end position="344"/>
    </location>
</feature>
<feature type="region of interest" description="Disordered" evidence="2">
    <location>
        <begin position="389"/>
        <end position="452"/>
    </location>
</feature>
<feature type="region of interest" description="Disordered" evidence="2">
    <location>
        <begin position="470"/>
        <end position="495"/>
    </location>
</feature>
<feature type="compositionally biased region" description="Low complexity" evidence="2">
    <location>
        <begin position="108"/>
        <end position="118"/>
    </location>
</feature>
<feature type="compositionally biased region" description="Polar residues" evidence="2">
    <location>
        <begin position="155"/>
        <end position="165"/>
    </location>
</feature>
<feature type="compositionally biased region" description="Polar residues" evidence="2">
    <location>
        <begin position="301"/>
        <end position="315"/>
    </location>
</feature>
<feature type="compositionally biased region" description="Polar residues" evidence="2">
    <location>
        <begin position="389"/>
        <end position="400"/>
    </location>
</feature>
<feature type="compositionally biased region" description="Basic residues" evidence="2">
    <location>
        <begin position="419"/>
        <end position="428"/>
    </location>
</feature>
<feature type="compositionally biased region" description="Low complexity" evidence="2">
    <location>
        <begin position="435"/>
        <end position="452"/>
    </location>
</feature>
<accession>Q152V3</accession>
<sequence>MFAQPYDHSFNDLFNQYVNMETSAADGKDSALSDFDQLFPLDSLSSDCGDLPPTVSTPKRHQSPQPWSNDWSLQNDGAAVDHFAFHDTVHPSAISDVNLNNFEVPSRPTATHALSTSPSTPPATPRRKPTQSALITPKSIRHRSPNERRSHLRKQSFSPSLMRSSNLSKSRMAYPEAWAQQIQNFSLHSSEDRLPLSPPPSDVLIQHENMPTEHIMNQPRDSAEMPPQYDARLYHQSPSVSCHRRTSQCQHASNSTTLITKLFHLDSSSPSSADDMFSSSHSSDPHSISSWQSDPLHASSLSFTPDLQGQDSQWWSPMPSRVAQQQASYLESPTPVRTTQNVGNQNDIMQGGLMIQFNPSYDMSADHSFSSSNMLPATPQKFDTSFTTSQIHNVSRSPSLSPKAGTSPRDIHNGSISKPTHRRTHSRKLSGQSMNAPKPAKASGSSSRGSNKSVSVSFVNFTAHDSKKILTGVAPSGSSKTKARREQEARDRRRKLSEAALRAVRSAGGDVEALEAVLC</sequence>